<dbReference type="EMBL" id="CP000919">
    <property type="protein sequence ID" value="ACO18827.1"/>
    <property type="molecule type" value="Genomic_DNA"/>
</dbReference>
<dbReference type="RefSeq" id="WP_000143268.1">
    <property type="nucleotide sequence ID" value="NC_012466.1"/>
</dbReference>
<dbReference type="SMR" id="C1CDW4"/>
<dbReference type="KEGG" id="sjj:SPJ_0910"/>
<dbReference type="HOGENOM" id="CLU_038009_1_0_9"/>
<dbReference type="Proteomes" id="UP000002206">
    <property type="component" value="Chromosome"/>
</dbReference>
<dbReference type="GO" id="GO:0005829">
    <property type="term" value="C:cytosol"/>
    <property type="evidence" value="ECO:0007669"/>
    <property type="project" value="TreeGrafter"/>
</dbReference>
<dbReference type="GO" id="GO:0005886">
    <property type="term" value="C:plasma membrane"/>
    <property type="evidence" value="ECO:0007669"/>
    <property type="project" value="UniProtKB-SubCell"/>
</dbReference>
<dbReference type="GO" id="GO:0005525">
    <property type="term" value="F:GTP binding"/>
    <property type="evidence" value="ECO:0007669"/>
    <property type="project" value="UniProtKB-UniRule"/>
</dbReference>
<dbReference type="GO" id="GO:0003924">
    <property type="term" value="F:GTPase activity"/>
    <property type="evidence" value="ECO:0007669"/>
    <property type="project" value="UniProtKB-UniRule"/>
</dbReference>
<dbReference type="GO" id="GO:0043024">
    <property type="term" value="F:ribosomal small subunit binding"/>
    <property type="evidence" value="ECO:0007669"/>
    <property type="project" value="TreeGrafter"/>
</dbReference>
<dbReference type="GO" id="GO:0070181">
    <property type="term" value="F:small ribosomal subunit rRNA binding"/>
    <property type="evidence" value="ECO:0007669"/>
    <property type="project" value="UniProtKB-UniRule"/>
</dbReference>
<dbReference type="GO" id="GO:0000028">
    <property type="term" value="P:ribosomal small subunit assembly"/>
    <property type="evidence" value="ECO:0007669"/>
    <property type="project" value="TreeGrafter"/>
</dbReference>
<dbReference type="CDD" id="cd04163">
    <property type="entry name" value="Era"/>
    <property type="match status" value="1"/>
</dbReference>
<dbReference type="CDD" id="cd22534">
    <property type="entry name" value="KH-II_Era"/>
    <property type="match status" value="1"/>
</dbReference>
<dbReference type="FunFam" id="3.30.300.20:FF:000003">
    <property type="entry name" value="GTPase Era"/>
    <property type="match status" value="1"/>
</dbReference>
<dbReference type="FunFam" id="3.40.50.300:FF:000094">
    <property type="entry name" value="GTPase Era"/>
    <property type="match status" value="1"/>
</dbReference>
<dbReference type="Gene3D" id="3.30.300.20">
    <property type="match status" value="1"/>
</dbReference>
<dbReference type="Gene3D" id="3.40.50.300">
    <property type="entry name" value="P-loop containing nucleotide triphosphate hydrolases"/>
    <property type="match status" value="1"/>
</dbReference>
<dbReference type="HAMAP" id="MF_00367">
    <property type="entry name" value="GTPase_Era"/>
    <property type="match status" value="1"/>
</dbReference>
<dbReference type="InterPro" id="IPR030388">
    <property type="entry name" value="G_ERA_dom"/>
</dbReference>
<dbReference type="InterPro" id="IPR006073">
    <property type="entry name" value="GTP-bd"/>
</dbReference>
<dbReference type="InterPro" id="IPR005662">
    <property type="entry name" value="GTPase_Era-like"/>
</dbReference>
<dbReference type="InterPro" id="IPR015946">
    <property type="entry name" value="KH_dom-like_a/b"/>
</dbReference>
<dbReference type="InterPro" id="IPR004044">
    <property type="entry name" value="KH_dom_type_2"/>
</dbReference>
<dbReference type="InterPro" id="IPR009019">
    <property type="entry name" value="KH_sf_prok-type"/>
</dbReference>
<dbReference type="InterPro" id="IPR027417">
    <property type="entry name" value="P-loop_NTPase"/>
</dbReference>
<dbReference type="InterPro" id="IPR005225">
    <property type="entry name" value="Small_GTP-bd"/>
</dbReference>
<dbReference type="NCBIfam" id="TIGR00436">
    <property type="entry name" value="era"/>
    <property type="match status" value="1"/>
</dbReference>
<dbReference type="NCBIfam" id="NF000908">
    <property type="entry name" value="PRK00089.1"/>
    <property type="match status" value="1"/>
</dbReference>
<dbReference type="NCBIfam" id="TIGR00231">
    <property type="entry name" value="small_GTP"/>
    <property type="match status" value="1"/>
</dbReference>
<dbReference type="PANTHER" id="PTHR42698">
    <property type="entry name" value="GTPASE ERA"/>
    <property type="match status" value="1"/>
</dbReference>
<dbReference type="PANTHER" id="PTHR42698:SF1">
    <property type="entry name" value="GTPASE ERA, MITOCHONDRIAL"/>
    <property type="match status" value="1"/>
</dbReference>
<dbReference type="Pfam" id="PF07650">
    <property type="entry name" value="KH_2"/>
    <property type="match status" value="1"/>
</dbReference>
<dbReference type="Pfam" id="PF01926">
    <property type="entry name" value="MMR_HSR1"/>
    <property type="match status" value="1"/>
</dbReference>
<dbReference type="SUPFAM" id="SSF52540">
    <property type="entry name" value="P-loop containing nucleoside triphosphate hydrolases"/>
    <property type="match status" value="1"/>
</dbReference>
<dbReference type="SUPFAM" id="SSF54814">
    <property type="entry name" value="Prokaryotic type KH domain (KH-domain type II)"/>
    <property type="match status" value="1"/>
</dbReference>
<dbReference type="PROSITE" id="PS51713">
    <property type="entry name" value="G_ERA"/>
    <property type="match status" value="1"/>
</dbReference>
<dbReference type="PROSITE" id="PS50823">
    <property type="entry name" value="KH_TYPE_2"/>
    <property type="match status" value="1"/>
</dbReference>
<accession>C1CDW4</accession>
<feature type="chain" id="PRO_1000189974" description="GTPase Era">
    <location>
        <begin position="1"/>
        <end position="299"/>
    </location>
</feature>
<feature type="domain" description="Era-type G" evidence="2">
    <location>
        <begin position="4"/>
        <end position="171"/>
    </location>
</feature>
<feature type="domain" description="KH type-2" evidence="1">
    <location>
        <begin position="202"/>
        <end position="280"/>
    </location>
</feature>
<feature type="region of interest" description="G1" evidence="2">
    <location>
        <begin position="12"/>
        <end position="19"/>
    </location>
</feature>
<feature type="region of interest" description="G2" evidence="2">
    <location>
        <begin position="38"/>
        <end position="42"/>
    </location>
</feature>
<feature type="region of interest" description="G3" evidence="2">
    <location>
        <begin position="59"/>
        <end position="62"/>
    </location>
</feature>
<feature type="region of interest" description="G4" evidence="2">
    <location>
        <begin position="121"/>
        <end position="124"/>
    </location>
</feature>
<feature type="region of interest" description="G5" evidence="2">
    <location>
        <begin position="150"/>
        <end position="152"/>
    </location>
</feature>
<feature type="binding site" evidence="1">
    <location>
        <begin position="12"/>
        <end position="19"/>
    </location>
    <ligand>
        <name>GTP</name>
        <dbReference type="ChEBI" id="CHEBI:37565"/>
    </ligand>
</feature>
<feature type="binding site" evidence="1">
    <location>
        <begin position="59"/>
        <end position="63"/>
    </location>
    <ligand>
        <name>GTP</name>
        <dbReference type="ChEBI" id="CHEBI:37565"/>
    </ligand>
</feature>
<feature type="binding site" evidence="1">
    <location>
        <begin position="121"/>
        <end position="124"/>
    </location>
    <ligand>
        <name>GTP</name>
        <dbReference type="ChEBI" id="CHEBI:37565"/>
    </ligand>
</feature>
<keyword id="KW-1003">Cell membrane</keyword>
<keyword id="KW-0963">Cytoplasm</keyword>
<keyword id="KW-0342">GTP-binding</keyword>
<keyword id="KW-0472">Membrane</keyword>
<keyword id="KW-0547">Nucleotide-binding</keyword>
<keyword id="KW-0690">Ribosome biogenesis</keyword>
<keyword id="KW-0694">RNA-binding</keyword>
<keyword id="KW-0699">rRNA-binding</keyword>
<protein>
    <recommendedName>
        <fullName evidence="1">GTPase Era</fullName>
    </recommendedName>
</protein>
<name>ERA_STRZJ</name>
<comment type="function">
    <text evidence="1">An essential GTPase that binds both GDP and GTP, with rapid nucleotide exchange. Plays a role in 16S rRNA processing and 30S ribosomal subunit biogenesis and possibly also in cell cycle regulation and energy metabolism.</text>
</comment>
<comment type="subunit">
    <text evidence="1">Monomer.</text>
</comment>
<comment type="subcellular location">
    <subcellularLocation>
        <location>Cytoplasm</location>
    </subcellularLocation>
    <subcellularLocation>
        <location evidence="1">Cell membrane</location>
        <topology evidence="1">Peripheral membrane protein</topology>
    </subcellularLocation>
</comment>
<comment type="similarity">
    <text evidence="1 2">Belongs to the TRAFAC class TrmE-Era-EngA-EngB-Septin-like GTPase superfamily. Era GTPase family.</text>
</comment>
<gene>
    <name evidence="1" type="primary">era</name>
    <name type="ordered locus">SPJ_0910</name>
</gene>
<reference key="1">
    <citation type="journal article" date="2010" name="Genome Biol.">
        <title>Structure and dynamics of the pan-genome of Streptococcus pneumoniae and closely related species.</title>
        <authorList>
            <person name="Donati C."/>
            <person name="Hiller N.L."/>
            <person name="Tettelin H."/>
            <person name="Muzzi A."/>
            <person name="Croucher N.J."/>
            <person name="Angiuoli S.V."/>
            <person name="Oggioni M."/>
            <person name="Dunning Hotopp J.C."/>
            <person name="Hu F.Z."/>
            <person name="Riley D.R."/>
            <person name="Covacci A."/>
            <person name="Mitchell T.J."/>
            <person name="Bentley S.D."/>
            <person name="Kilian M."/>
            <person name="Ehrlich G.D."/>
            <person name="Rappuoli R."/>
            <person name="Moxon E.R."/>
            <person name="Masignani V."/>
        </authorList>
    </citation>
    <scope>NUCLEOTIDE SEQUENCE [LARGE SCALE GENOMIC DNA]</scope>
    <source>
        <strain>JJA</strain>
    </source>
</reference>
<proteinExistence type="inferred from homology"/>
<sequence>MTFKSGFVAILGRPNVGKSTFLNHVMGQKIAIMSDKAQTTRNKIMGIYTTDKEQIVFIDTPGIHKPKTALGDFMVESAYSTLREVDTVLFMVPADEARGKGDDMIIERLKAAKVPVILVVNKIDKVHPDQLLSQIDDFRNQMDFKEIVPISALQGNNVSRLVDILSENLGEGFQYFPSDQITDHPERFLVSEMVREKVLHLTREEIPHSVAVVVDSMKRDEETDKVHIRATIMVERDSQKGIIIGKGGAMLKKIGSMARRDIELMLGDKVFLETWVKVKKNWRDKKLDLADFGYNEREY</sequence>
<evidence type="ECO:0000255" key="1">
    <source>
        <dbReference type="HAMAP-Rule" id="MF_00367"/>
    </source>
</evidence>
<evidence type="ECO:0000255" key="2">
    <source>
        <dbReference type="PROSITE-ProRule" id="PRU01050"/>
    </source>
</evidence>
<organism>
    <name type="scientific">Streptococcus pneumoniae (strain JJA)</name>
    <dbReference type="NCBI Taxonomy" id="488222"/>
    <lineage>
        <taxon>Bacteria</taxon>
        <taxon>Bacillati</taxon>
        <taxon>Bacillota</taxon>
        <taxon>Bacilli</taxon>
        <taxon>Lactobacillales</taxon>
        <taxon>Streptococcaceae</taxon>
        <taxon>Streptococcus</taxon>
    </lineage>
</organism>